<feature type="chain" id="PRO_0000323884" description="Uridylate kinase">
    <location>
        <begin position="1"/>
        <end position="238"/>
    </location>
</feature>
<feature type="binding site" evidence="1">
    <location>
        <begin position="12"/>
        <end position="15"/>
    </location>
    <ligand>
        <name>ATP</name>
        <dbReference type="ChEBI" id="CHEBI:30616"/>
    </ligand>
</feature>
<feature type="binding site" evidence="1">
    <location>
        <position position="54"/>
    </location>
    <ligand>
        <name>UMP</name>
        <dbReference type="ChEBI" id="CHEBI:57865"/>
    </ligand>
</feature>
<feature type="binding site" evidence="1">
    <location>
        <position position="55"/>
    </location>
    <ligand>
        <name>ATP</name>
        <dbReference type="ChEBI" id="CHEBI:30616"/>
    </ligand>
</feature>
<feature type="binding site" evidence="1">
    <location>
        <position position="59"/>
    </location>
    <ligand>
        <name>ATP</name>
        <dbReference type="ChEBI" id="CHEBI:30616"/>
    </ligand>
</feature>
<feature type="binding site" evidence="1">
    <location>
        <position position="74"/>
    </location>
    <ligand>
        <name>UMP</name>
        <dbReference type="ChEBI" id="CHEBI:57865"/>
    </ligand>
</feature>
<feature type="binding site" evidence="1">
    <location>
        <begin position="135"/>
        <end position="142"/>
    </location>
    <ligand>
        <name>UMP</name>
        <dbReference type="ChEBI" id="CHEBI:57865"/>
    </ligand>
</feature>
<feature type="binding site" evidence="1">
    <location>
        <position position="162"/>
    </location>
    <ligand>
        <name>ATP</name>
        <dbReference type="ChEBI" id="CHEBI:30616"/>
    </ligand>
</feature>
<feature type="binding site" evidence="1">
    <location>
        <position position="168"/>
    </location>
    <ligand>
        <name>ATP</name>
        <dbReference type="ChEBI" id="CHEBI:30616"/>
    </ligand>
</feature>
<feature type="binding site" evidence="1">
    <location>
        <position position="171"/>
    </location>
    <ligand>
        <name>ATP</name>
        <dbReference type="ChEBI" id="CHEBI:30616"/>
    </ligand>
</feature>
<organism>
    <name type="scientific">Methylobacillus flagellatus (strain ATCC 51484 / DSM 6875 / VKM B-1610 / KT)</name>
    <dbReference type="NCBI Taxonomy" id="265072"/>
    <lineage>
        <taxon>Bacteria</taxon>
        <taxon>Pseudomonadati</taxon>
        <taxon>Pseudomonadota</taxon>
        <taxon>Betaproteobacteria</taxon>
        <taxon>Nitrosomonadales</taxon>
        <taxon>Methylophilaceae</taxon>
        <taxon>Methylobacillus</taxon>
    </lineage>
</organism>
<accession>Q1H141</accession>
<reference key="1">
    <citation type="submission" date="2006-03" db="EMBL/GenBank/DDBJ databases">
        <title>Complete sequence of Methylobacillus flagellatus KT.</title>
        <authorList>
            <consortium name="US DOE Joint Genome Institute"/>
            <person name="Copeland A."/>
            <person name="Lucas S."/>
            <person name="Lapidus A."/>
            <person name="Barry K."/>
            <person name="Detter J.C."/>
            <person name="Glavina del Rio T."/>
            <person name="Hammon N."/>
            <person name="Israni S."/>
            <person name="Dalin E."/>
            <person name="Tice H."/>
            <person name="Pitluck S."/>
            <person name="Brettin T."/>
            <person name="Bruce D."/>
            <person name="Han C."/>
            <person name="Tapia R."/>
            <person name="Saunders E."/>
            <person name="Gilna P."/>
            <person name="Schmutz J."/>
            <person name="Larimer F."/>
            <person name="Land M."/>
            <person name="Kyrpides N."/>
            <person name="Anderson I."/>
            <person name="Richardson P."/>
        </authorList>
    </citation>
    <scope>NUCLEOTIDE SEQUENCE [LARGE SCALE GENOMIC DNA]</scope>
    <source>
        <strain>ATCC 51484 / DSM 6875 / VKM B-1610 / KT</strain>
    </source>
</reference>
<gene>
    <name evidence="1" type="primary">pyrH</name>
    <name type="ordered locus">Mfla_1528</name>
</gene>
<dbReference type="EC" id="2.7.4.22" evidence="1"/>
<dbReference type="EMBL" id="CP000284">
    <property type="protein sequence ID" value="ABE49796.1"/>
    <property type="molecule type" value="Genomic_DNA"/>
</dbReference>
<dbReference type="RefSeq" id="WP_011479750.1">
    <property type="nucleotide sequence ID" value="NC_007947.1"/>
</dbReference>
<dbReference type="SMR" id="Q1H141"/>
<dbReference type="STRING" id="265072.Mfla_1528"/>
<dbReference type="KEGG" id="mfa:Mfla_1528"/>
<dbReference type="eggNOG" id="COG0528">
    <property type="taxonomic scope" value="Bacteria"/>
</dbReference>
<dbReference type="HOGENOM" id="CLU_033861_0_0_4"/>
<dbReference type="OrthoDB" id="9807458at2"/>
<dbReference type="UniPathway" id="UPA00159">
    <property type="reaction ID" value="UER00275"/>
</dbReference>
<dbReference type="Proteomes" id="UP000002440">
    <property type="component" value="Chromosome"/>
</dbReference>
<dbReference type="GO" id="GO:0005829">
    <property type="term" value="C:cytosol"/>
    <property type="evidence" value="ECO:0007669"/>
    <property type="project" value="TreeGrafter"/>
</dbReference>
<dbReference type="GO" id="GO:0005524">
    <property type="term" value="F:ATP binding"/>
    <property type="evidence" value="ECO:0007669"/>
    <property type="project" value="UniProtKB-KW"/>
</dbReference>
<dbReference type="GO" id="GO:0033862">
    <property type="term" value="F:UMP kinase activity"/>
    <property type="evidence" value="ECO:0007669"/>
    <property type="project" value="UniProtKB-EC"/>
</dbReference>
<dbReference type="GO" id="GO:0044210">
    <property type="term" value="P:'de novo' CTP biosynthetic process"/>
    <property type="evidence" value="ECO:0007669"/>
    <property type="project" value="UniProtKB-UniRule"/>
</dbReference>
<dbReference type="GO" id="GO:0006225">
    <property type="term" value="P:UDP biosynthetic process"/>
    <property type="evidence" value="ECO:0007669"/>
    <property type="project" value="TreeGrafter"/>
</dbReference>
<dbReference type="CDD" id="cd04254">
    <property type="entry name" value="AAK_UMPK-PyrH-Ec"/>
    <property type="match status" value="1"/>
</dbReference>
<dbReference type="FunFam" id="3.40.1160.10:FF:000001">
    <property type="entry name" value="Uridylate kinase"/>
    <property type="match status" value="1"/>
</dbReference>
<dbReference type="Gene3D" id="3.40.1160.10">
    <property type="entry name" value="Acetylglutamate kinase-like"/>
    <property type="match status" value="1"/>
</dbReference>
<dbReference type="HAMAP" id="MF_01220_B">
    <property type="entry name" value="PyrH_B"/>
    <property type="match status" value="1"/>
</dbReference>
<dbReference type="InterPro" id="IPR036393">
    <property type="entry name" value="AceGlu_kinase-like_sf"/>
</dbReference>
<dbReference type="InterPro" id="IPR001048">
    <property type="entry name" value="Asp/Glu/Uridylate_kinase"/>
</dbReference>
<dbReference type="InterPro" id="IPR011817">
    <property type="entry name" value="Uridylate_kinase"/>
</dbReference>
<dbReference type="InterPro" id="IPR015963">
    <property type="entry name" value="Uridylate_kinase_bac"/>
</dbReference>
<dbReference type="NCBIfam" id="TIGR02075">
    <property type="entry name" value="pyrH_bact"/>
    <property type="match status" value="1"/>
</dbReference>
<dbReference type="PANTHER" id="PTHR42833">
    <property type="entry name" value="URIDYLATE KINASE"/>
    <property type="match status" value="1"/>
</dbReference>
<dbReference type="PANTHER" id="PTHR42833:SF4">
    <property type="entry name" value="URIDYLATE KINASE PUMPKIN, CHLOROPLASTIC"/>
    <property type="match status" value="1"/>
</dbReference>
<dbReference type="Pfam" id="PF00696">
    <property type="entry name" value="AA_kinase"/>
    <property type="match status" value="1"/>
</dbReference>
<dbReference type="PIRSF" id="PIRSF005650">
    <property type="entry name" value="Uridylate_kin"/>
    <property type="match status" value="1"/>
</dbReference>
<dbReference type="SUPFAM" id="SSF53633">
    <property type="entry name" value="Carbamate kinase-like"/>
    <property type="match status" value="1"/>
</dbReference>
<evidence type="ECO:0000255" key="1">
    <source>
        <dbReference type="HAMAP-Rule" id="MF_01220"/>
    </source>
</evidence>
<protein>
    <recommendedName>
        <fullName evidence="1">Uridylate kinase</fullName>
        <shortName evidence="1">UK</shortName>
        <ecNumber evidence="1">2.7.4.22</ecNumber>
    </recommendedName>
    <alternativeName>
        <fullName evidence="1">Uridine monophosphate kinase</fullName>
        <shortName evidence="1">UMP kinase</shortName>
        <shortName evidence="1">UMPK</shortName>
    </alternativeName>
</protein>
<comment type="function">
    <text evidence="1">Catalyzes the reversible phosphorylation of UMP to UDP.</text>
</comment>
<comment type="catalytic activity">
    <reaction evidence="1">
        <text>UMP + ATP = UDP + ADP</text>
        <dbReference type="Rhea" id="RHEA:24400"/>
        <dbReference type="ChEBI" id="CHEBI:30616"/>
        <dbReference type="ChEBI" id="CHEBI:57865"/>
        <dbReference type="ChEBI" id="CHEBI:58223"/>
        <dbReference type="ChEBI" id="CHEBI:456216"/>
        <dbReference type="EC" id="2.7.4.22"/>
    </reaction>
</comment>
<comment type="activity regulation">
    <text evidence="1">Inhibited by UTP.</text>
</comment>
<comment type="pathway">
    <text evidence="1">Pyrimidine metabolism; CTP biosynthesis via de novo pathway; UDP from UMP (UMPK route): step 1/1.</text>
</comment>
<comment type="subunit">
    <text evidence="1">Homohexamer.</text>
</comment>
<comment type="subcellular location">
    <subcellularLocation>
        <location evidence="1">Cytoplasm</location>
    </subcellularLocation>
</comment>
<comment type="similarity">
    <text evidence="1">Belongs to the UMP kinase family.</text>
</comment>
<sequence>MSTPAYKRILLKLSGEALMGDDSYGINRATISRIVEEIKEVVDLGVEVAVVIGGGNIFRGVAPAAEGMDRATADYMGMLATVMNALALQDAMRHIGLVSRVQSALNIEQVAEPYIRGKAIRYLEEGRVVIFGAGTGNPFFTTDTAAALRGMEINAEIVLKATKVDGVYTDDPKRNPEAMRYKTLTFDEAIVKNLKVMDATALTLCRDQKLPISVFSIFRQGALKRVVLGEDEGTRVLP</sequence>
<name>PYRH_METFK</name>
<keyword id="KW-0067">ATP-binding</keyword>
<keyword id="KW-0963">Cytoplasm</keyword>
<keyword id="KW-0418">Kinase</keyword>
<keyword id="KW-0547">Nucleotide-binding</keyword>
<keyword id="KW-0665">Pyrimidine biosynthesis</keyword>
<keyword id="KW-1185">Reference proteome</keyword>
<keyword id="KW-0808">Transferase</keyword>
<proteinExistence type="inferred from homology"/>